<keyword id="KW-0028">Amino-acid biosynthesis</keyword>
<keyword id="KW-0223">Dioxygenase</keyword>
<keyword id="KW-0408">Iron</keyword>
<keyword id="KW-0479">Metal-binding</keyword>
<keyword id="KW-0486">Methionine biosynthesis</keyword>
<keyword id="KW-0533">Nickel</keyword>
<keyword id="KW-0560">Oxidoreductase</keyword>
<protein>
    <recommendedName>
        <fullName evidence="1">Acireductone dioxygenase</fullName>
    </recommendedName>
    <alternativeName>
        <fullName evidence="1">1,2-dihydroxy-3-keto-5-methylthiopentene dioxygenase</fullName>
        <shortName evidence="1">DHK-MTPene dioxygenase</shortName>
    </alternativeName>
    <alternativeName>
        <fullName evidence="1">Acireductone dioxygenase (Fe(2+)-requiring)</fullName>
        <shortName evidence="1">ARD'</shortName>
        <shortName evidence="1">Fe-ARD</shortName>
        <ecNumber evidence="1">1.13.11.54</ecNumber>
    </alternativeName>
    <alternativeName>
        <fullName evidence="1">Acireductone dioxygenase (Ni(2+)-requiring)</fullName>
        <shortName evidence="1">ARD</shortName>
        <shortName evidence="1">Ni-ARD</shortName>
        <ecNumber evidence="1">1.13.11.53</ecNumber>
    </alternativeName>
</protein>
<sequence length="181" mass="20552">MSSLTVYHENQPEQPLKLLTHAEDIASTLAEVGVRFERWEAAAPIAAGASQDEVIAAYAHEIERLKRERGYITVDVVSLNSDHPQKAELRAKFLDEHRHGEDEVRFFVAGRGLFVLHIEEHVYAVLCERNDLISVPAGTRHWFDMGEHPHFVAVRLFNNPEGWVAQFTGDDIASRFPLLED</sequence>
<name>MTND_PSEAB</name>
<comment type="function">
    <text evidence="1">Catalyzes 2 different reactions between oxygen and the acireductone 1,2-dihydroxy-3-keto-5-methylthiopentene (DHK-MTPene) depending upon the metal bound in the active site. Fe-containing acireductone dioxygenase (Fe-ARD) produces formate and 2-keto-4-methylthiobutyrate (KMTB), the alpha-ketoacid precursor of methionine in the methionine recycle pathway. Ni-containing acireductone dioxygenase (Ni-ARD) produces methylthiopropionate, carbon monoxide and formate, and does not lie on the methionine recycle pathway.</text>
</comment>
<comment type="catalytic activity">
    <reaction evidence="1">
        <text>1,2-dihydroxy-5-(methylsulfanyl)pent-1-en-3-one + O2 = 3-(methylsulfanyl)propanoate + CO + formate + 2 H(+)</text>
        <dbReference type="Rhea" id="RHEA:14161"/>
        <dbReference type="ChEBI" id="CHEBI:15378"/>
        <dbReference type="ChEBI" id="CHEBI:15379"/>
        <dbReference type="ChEBI" id="CHEBI:15740"/>
        <dbReference type="ChEBI" id="CHEBI:17245"/>
        <dbReference type="ChEBI" id="CHEBI:49016"/>
        <dbReference type="ChEBI" id="CHEBI:49252"/>
        <dbReference type="EC" id="1.13.11.53"/>
    </reaction>
</comment>
<comment type="catalytic activity">
    <reaction evidence="1">
        <text>1,2-dihydroxy-5-(methylsulfanyl)pent-1-en-3-one + O2 = 4-methylsulfanyl-2-oxobutanoate + formate + 2 H(+)</text>
        <dbReference type="Rhea" id="RHEA:24504"/>
        <dbReference type="ChEBI" id="CHEBI:15378"/>
        <dbReference type="ChEBI" id="CHEBI:15379"/>
        <dbReference type="ChEBI" id="CHEBI:15740"/>
        <dbReference type="ChEBI" id="CHEBI:16723"/>
        <dbReference type="ChEBI" id="CHEBI:49252"/>
        <dbReference type="EC" id="1.13.11.54"/>
    </reaction>
</comment>
<comment type="cofactor">
    <cofactor evidence="1">
        <name>Fe(2+)</name>
        <dbReference type="ChEBI" id="CHEBI:29033"/>
    </cofactor>
    <text evidence="1">Binds 1 Fe(2+) cation per monomer.</text>
</comment>
<comment type="cofactor">
    <cofactor evidence="1">
        <name>Ni(2+)</name>
        <dbReference type="ChEBI" id="CHEBI:49786"/>
    </cofactor>
    <text evidence="1">Binds 1 nickel ion per monomer.</text>
</comment>
<comment type="pathway">
    <text evidence="1">Amino-acid biosynthesis; L-methionine biosynthesis via salvage pathway; L-methionine from S-methyl-5-thio-alpha-D-ribose 1-phosphate: step 5/6.</text>
</comment>
<comment type="subunit">
    <text evidence="1">Monomer.</text>
</comment>
<comment type="similarity">
    <text evidence="1">Belongs to the acireductone dioxygenase (ARD) family.</text>
</comment>
<evidence type="ECO:0000255" key="1">
    <source>
        <dbReference type="HAMAP-Rule" id="MF_01682"/>
    </source>
</evidence>
<gene>
    <name evidence="1" type="primary">mtnD</name>
    <name type="ordered locus">PA14_42730</name>
</gene>
<accession>Q02KH4</accession>
<feature type="chain" id="PRO_0000359219" description="Acireductone dioxygenase">
    <location>
        <begin position="1"/>
        <end position="181"/>
    </location>
</feature>
<feature type="binding site" evidence="1">
    <location>
        <position position="97"/>
    </location>
    <ligand>
        <name>Fe(2+)</name>
        <dbReference type="ChEBI" id="CHEBI:29033"/>
    </ligand>
</feature>
<feature type="binding site" evidence="1">
    <location>
        <position position="97"/>
    </location>
    <ligand>
        <name>Ni(2+)</name>
        <dbReference type="ChEBI" id="CHEBI:49786"/>
    </ligand>
</feature>
<feature type="binding site" evidence="1">
    <location>
        <position position="99"/>
    </location>
    <ligand>
        <name>Fe(2+)</name>
        <dbReference type="ChEBI" id="CHEBI:29033"/>
    </ligand>
</feature>
<feature type="binding site" evidence="1">
    <location>
        <position position="99"/>
    </location>
    <ligand>
        <name>Ni(2+)</name>
        <dbReference type="ChEBI" id="CHEBI:49786"/>
    </ligand>
</feature>
<feature type="binding site" evidence="1">
    <location>
        <position position="103"/>
    </location>
    <ligand>
        <name>Fe(2+)</name>
        <dbReference type="ChEBI" id="CHEBI:29033"/>
    </ligand>
</feature>
<feature type="binding site" evidence="1">
    <location>
        <position position="103"/>
    </location>
    <ligand>
        <name>Ni(2+)</name>
        <dbReference type="ChEBI" id="CHEBI:49786"/>
    </ligand>
</feature>
<feature type="binding site" evidence="1">
    <location>
        <position position="141"/>
    </location>
    <ligand>
        <name>Fe(2+)</name>
        <dbReference type="ChEBI" id="CHEBI:29033"/>
    </ligand>
</feature>
<feature type="binding site" evidence="1">
    <location>
        <position position="141"/>
    </location>
    <ligand>
        <name>Ni(2+)</name>
        <dbReference type="ChEBI" id="CHEBI:49786"/>
    </ligand>
</feature>
<feature type="site" description="May play a role in metal incorporation in vivo" evidence="1">
    <location>
        <position position="96"/>
    </location>
</feature>
<feature type="site" description="May play a role in transmitting local conformational changes" evidence="1">
    <location>
        <position position="102"/>
    </location>
</feature>
<feature type="site" description="Important to generate the dianion" evidence="1">
    <location>
        <position position="105"/>
    </location>
</feature>
<proteinExistence type="inferred from homology"/>
<dbReference type="EC" id="1.13.11.54" evidence="1"/>
<dbReference type="EC" id="1.13.11.53" evidence="1"/>
<dbReference type="EMBL" id="CP000438">
    <property type="protein sequence ID" value="ABJ10869.1"/>
    <property type="molecule type" value="Genomic_DNA"/>
</dbReference>
<dbReference type="RefSeq" id="WP_003087656.1">
    <property type="nucleotide sequence ID" value="NZ_CP034244.1"/>
</dbReference>
<dbReference type="SMR" id="Q02KH4"/>
<dbReference type="KEGG" id="pau:PA14_42730"/>
<dbReference type="PseudoCAP" id="PA14_42730"/>
<dbReference type="HOGENOM" id="CLU_125400_0_0_6"/>
<dbReference type="BioCyc" id="PAER208963:G1G74-3582-MONOMER"/>
<dbReference type="UniPathway" id="UPA00904">
    <property type="reaction ID" value="UER00878"/>
</dbReference>
<dbReference type="Proteomes" id="UP000000653">
    <property type="component" value="Chromosome"/>
</dbReference>
<dbReference type="GO" id="GO:0010308">
    <property type="term" value="F:acireductone dioxygenase (Ni2+-requiring) activity"/>
    <property type="evidence" value="ECO:0007669"/>
    <property type="project" value="UniProtKB-UniRule"/>
</dbReference>
<dbReference type="GO" id="GO:0010309">
    <property type="term" value="F:acireductone dioxygenase [iron(II)-requiring] activity"/>
    <property type="evidence" value="ECO:0007669"/>
    <property type="project" value="UniProtKB-UniRule"/>
</dbReference>
<dbReference type="GO" id="GO:0005506">
    <property type="term" value="F:iron ion binding"/>
    <property type="evidence" value="ECO:0007669"/>
    <property type="project" value="UniProtKB-UniRule"/>
</dbReference>
<dbReference type="GO" id="GO:0016151">
    <property type="term" value="F:nickel cation binding"/>
    <property type="evidence" value="ECO:0007669"/>
    <property type="project" value="UniProtKB-UniRule"/>
</dbReference>
<dbReference type="GO" id="GO:0019509">
    <property type="term" value="P:L-methionine salvage from methylthioadenosine"/>
    <property type="evidence" value="ECO:0007669"/>
    <property type="project" value="UniProtKB-UniRule"/>
</dbReference>
<dbReference type="GO" id="GO:0019284">
    <property type="term" value="P:L-methionine salvage from S-adenosylmethionine"/>
    <property type="evidence" value="ECO:0007669"/>
    <property type="project" value="InterPro"/>
</dbReference>
<dbReference type="CDD" id="cd02232">
    <property type="entry name" value="cupin_ARD"/>
    <property type="match status" value="1"/>
</dbReference>
<dbReference type="FunFam" id="2.60.120.10:FF:000056">
    <property type="entry name" value="Acireductone dioxygenase"/>
    <property type="match status" value="1"/>
</dbReference>
<dbReference type="Gene3D" id="2.60.120.10">
    <property type="entry name" value="Jelly Rolls"/>
    <property type="match status" value="1"/>
</dbReference>
<dbReference type="HAMAP" id="MF_01682">
    <property type="entry name" value="Salvage_MtnD"/>
    <property type="match status" value="1"/>
</dbReference>
<dbReference type="InterPro" id="IPR004313">
    <property type="entry name" value="ARD"/>
</dbReference>
<dbReference type="InterPro" id="IPR023956">
    <property type="entry name" value="ARD_bac"/>
</dbReference>
<dbReference type="InterPro" id="IPR014710">
    <property type="entry name" value="RmlC-like_jellyroll"/>
</dbReference>
<dbReference type="InterPro" id="IPR011051">
    <property type="entry name" value="RmlC_Cupin_sf"/>
</dbReference>
<dbReference type="PANTHER" id="PTHR23418">
    <property type="entry name" value="ACIREDUCTONE DIOXYGENASE"/>
    <property type="match status" value="1"/>
</dbReference>
<dbReference type="PANTHER" id="PTHR23418:SF0">
    <property type="entry name" value="ACIREDUCTONE DIOXYGENASE"/>
    <property type="match status" value="1"/>
</dbReference>
<dbReference type="Pfam" id="PF03079">
    <property type="entry name" value="ARD"/>
    <property type="match status" value="1"/>
</dbReference>
<dbReference type="SUPFAM" id="SSF51182">
    <property type="entry name" value="RmlC-like cupins"/>
    <property type="match status" value="1"/>
</dbReference>
<reference key="1">
    <citation type="journal article" date="2006" name="Genome Biol.">
        <title>Genomic analysis reveals that Pseudomonas aeruginosa virulence is combinatorial.</title>
        <authorList>
            <person name="Lee D.G."/>
            <person name="Urbach J.M."/>
            <person name="Wu G."/>
            <person name="Liberati N.T."/>
            <person name="Feinbaum R.L."/>
            <person name="Miyata S."/>
            <person name="Diggins L.T."/>
            <person name="He J."/>
            <person name="Saucier M."/>
            <person name="Deziel E."/>
            <person name="Friedman L."/>
            <person name="Li L."/>
            <person name="Grills G."/>
            <person name="Montgomery K."/>
            <person name="Kucherlapati R."/>
            <person name="Rahme L.G."/>
            <person name="Ausubel F.M."/>
        </authorList>
    </citation>
    <scope>NUCLEOTIDE SEQUENCE [LARGE SCALE GENOMIC DNA]</scope>
    <source>
        <strain>UCBPP-PA14</strain>
    </source>
</reference>
<organism>
    <name type="scientific">Pseudomonas aeruginosa (strain UCBPP-PA14)</name>
    <dbReference type="NCBI Taxonomy" id="208963"/>
    <lineage>
        <taxon>Bacteria</taxon>
        <taxon>Pseudomonadati</taxon>
        <taxon>Pseudomonadota</taxon>
        <taxon>Gammaproteobacteria</taxon>
        <taxon>Pseudomonadales</taxon>
        <taxon>Pseudomonadaceae</taxon>
        <taxon>Pseudomonas</taxon>
    </lineage>
</organism>